<proteinExistence type="inferred from homology"/>
<organism>
    <name type="scientific">Cronobacter sakazakii (strain ATCC BAA-894)</name>
    <name type="common">Enterobacter sakazakii</name>
    <dbReference type="NCBI Taxonomy" id="290339"/>
    <lineage>
        <taxon>Bacteria</taxon>
        <taxon>Pseudomonadati</taxon>
        <taxon>Pseudomonadota</taxon>
        <taxon>Gammaproteobacteria</taxon>
        <taxon>Enterobacterales</taxon>
        <taxon>Enterobacteriaceae</taxon>
        <taxon>Cronobacter</taxon>
    </lineage>
</organism>
<gene>
    <name evidence="1" type="primary">diaA</name>
    <name type="ordered locus">ESA_03539</name>
</gene>
<comment type="function">
    <text evidence="1">Required for the timely initiation of chromosomal replication via direct interactions with the DnaA initiator protein.</text>
</comment>
<comment type="subunit">
    <text evidence="1">Homotetramer; dimer of dimers.</text>
</comment>
<comment type="similarity">
    <text evidence="1">Belongs to the SIS family. DiaA subfamily.</text>
</comment>
<protein>
    <recommendedName>
        <fullName evidence="1">DnaA initiator-associating protein DiaA</fullName>
    </recommendedName>
</protein>
<evidence type="ECO:0000255" key="1">
    <source>
        <dbReference type="HAMAP-Rule" id="MF_01157"/>
    </source>
</evidence>
<reference key="1">
    <citation type="journal article" date="2010" name="PLoS ONE">
        <title>Genome sequence of Cronobacter sakazakii BAA-894 and comparative genomic hybridization analysis with other Cronobacter species.</title>
        <authorList>
            <person name="Kucerova E."/>
            <person name="Clifton S.W."/>
            <person name="Xia X.Q."/>
            <person name="Long F."/>
            <person name="Porwollik S."/>
            <person name="Fulton L."/>
            <person name="Fronick C."/>
            <person name="Minx P."/>
            <person name="Kyung K."/>
            <person name="Warren W."/>
            <person name="Fulton R."/>
            <person name="Feng D."/>
            <person name="Wollam A."/>
            <person name="Shah N."/>
            <person name="Bhonagiri V."/>
            <person name="Nash W.E."/>
            <person name="Hallsworth-Pepin K."/>
            <person name="Wilson R.K."/>
            <person name="McClelland M."/>
            <person name="Forsythe S.J."/>
        </authorList>
    </citation>
    <scope>NUCLEOTIDE SEQUENCE [LARGE SCALE GENOMIC DNA]</scope>
    <source>
        <strain>ATCC BAA-894</strain>
    </source>
</reference>
<name>DIAA_CROS8</name>
<keyword id="KW-0235">DNA replication</keyword>
<keyword id="KW-1185">Reference proteome</keyword>
<sequence length="196" mass="21130">MLERIKVCFTESIQTQIAAAEALPDAISRAAMTLVQSLLNGNKILCCGNGTSGANAQHFAASMINRYETERPGLPAIALNTDNVVLTAITNDRLHDEVYAKQVRALGHAGDVLLAISTRGNSRDIVKAVEAAVTRDMTIVALTGYDGGELAGLLGPQDVEIRIPSHRSARIHEMHMLTVNCLCDLIDNTLFPHQDD</sequence>
<dbReference type="EMBL" id="CP000783">
    <property type="protein sequence ID" value="ABU78753.1"/>
    <property type="molecule type" value="Genomic_DNA"/>
</dbReference>
<dbReference type="RefSeq" id="WP_004385040.1">
    <property type="nucleotide sequence ID" value="NC_009778.1"/>
</dbReference>
<dbReference type="SMR" id="A7MIP9"/>
<dbReference type="GeneID" id="92807957"/>
<dbReference type="KEGG" id="esa:ESA_03539"/>
<dbReference type="HOGENOM" id="CLU_080999_3_1_6"/>
<dbReference type="Proteomes" id="UP000000260">
    <property type="component" value="Chromosome"/>
</dbReference>
<dbReference type="GO" id="GO:0097367">
    <property type="term" value="F:carbohydrate derivative binding"/>
    <property type="evidence" value="ECO:0007669"/>
    <property type="project" value="InterPro"/>
</dbReference>
<dbReference type="GO" id="GO:1901135">
    <property type="term" value="P:carbohydrate derivative metabolic process"/>
    <property type="evidence" value="ECO:0007669"/>
    <property type="project" value="InterPro"/>
</dbReference>
<dbReference type="GO" id="GO:0006260">
    <property type="term" value="P:DNA replication"/>
    <property type="evidence" value="ECO:0007669"/>
    <property type="project" value="UniProtKB-UniRule"/>
</dbReference>
<dbReference type="CDD" id="cd05006">
    <property type="entry name" value="SIS_GmhA"/>
    <property type="match status" value="1"/>
</dbReference>
<dbReference type="FunFam" id="3.40.50.10490:FF:000006">
    <property type="entry name" value="DnaA initiator-associating protein DiaA"/>
    <property type="match status" value="1"/>
</dbReference>
<dbReference type="Gene3D" id="3.40.50.10490">
    <property type="entry name" value="Glucose-6-phosphate isomerase like protein, domain 1"/>
    <property type="match status" value="1"/>
</dbReference>
<dbReference type="HAMAP" id="MF_01157">
    <property type="entry name" value="SIS_DiaA"/>
    <property type="match status" value="1"/>
</dbReference>
<dbReference type="InterPro" id="IPR023070">
    <property type="entry name" value="DiaA"/>
</dbReference>
<dbReference type="InterPro" id="IPR035461">
    <property type="entry name" value="GmhA/DiaA"/>
</dbReference>
<dbReference type="InterPro" id="IPR001347">
    <property type="entry name" value="SIS_dom"/>
</dbReference>
<dbReference type="InterPro" id="IPR046348">
    <property type="entry name" value="SIS_dom_sf"/>
</dbReference>
<dbReference type="InterPro" id="IPR050099">
    <property type="entry name" value="SIS_GmhA/DiaA_subfam"/>
</dbReference>
<dbReference type="NCBIfam" id="NF008138">
    <property type="entry name" value="PRK10886.1"/>
    <property type="match status" value="1"/>
</dbReference>
<dbReference type="PANTHER" id="PTHR30390:SF6">
    <property type="entry name" value="DNAA INITIATOR-ASSOCIATING PROTEIN DIAA"/>
    <property type="match status" value="1"/>
</dbReference>
<dbReference type="PANTHER" id="PTHR30390">
    <property type="entry name" value="SEDOHEPTULOSE 7-PHOSPHATE ISOMERASE / DNAA INITIATOR-ASSOCIATING FACTOR FOR REPLICATION INITIATION"/>
    <property type="match status" value="1"/>
</dbReference>
<dbReference type="Pfam" id="PF13580">
    <property type="entry name" value="SIS_2"/>
    <property type="match status" value="1"/>
</dbReference>
<dbReference type="SUPFAM" id="SSF53697">
    <property type="entry name" value="SIS domain"/>
    <property type="match status" value="1"/>
</dbReference>
<dbReference type="PROSITE" id="PS51464">
    <property type="entry name" value="SIS"/>
    <property type="match status" value="1"/>
</dbReference>
<feature type="chain" id="PRO_1000065544" description="DnaA initiator-associating protein DiaA">
    <location>
        <begin position="1"/>
        <end position="196"/>
    </location>
</feature>
<feature type="domain" description="SIS" evidence="1">
    <location>
        <begin position="34"/>
        <end position="196"/>
    </location>
</feature>
<accession>A7MIP9</accession>